<proteinExistence type="evidence at protein level"/>
<dbReference type="EC" id="1.2.1.3" evidence="2"/>
<dbReference type="EMBL" id="BA000017">
    <property type="protein sequence ID" value="BAB58284.1"/>
    <property type="molecule type" value="Genomic_DNA"/>
</dbReference>
<dbReference type="RefSeq" id="WP_001206093.1">
    <property type="nucleotide sequence ID" value="NC_002758.2"/>
</dbReference>
<dbReference type="PDB" id="3TY7">
    <property type="method" value="X-ray"/>
    <property type="resolution" value="2.40 A"/>
    <property type="chains" value="A/B=1-475"/>
</dbReference>
<dbReference type="PDBsum" id="3TY7"/>
<dbReference type="SMR" id="Q99SD6"/>
<dbReference type="KEGG" id="sav:SAV2122"/>
<dbReference type="HOGENOM" id="CLU_005391_0_2_9"/>
<dbReference type="PhylomeDB" id="Q99SD6"/>
<dbReference type="EvolutionaryTrace" id="Q99SD6"/>
<dbReference type="Proteomes" id="UP000002481">
    <property type="component" value="Chromosome"/>
</dbReference>
<dbReference type="GO" id="GO:0004029">
    <property type="term" value="F:aldehyde dehydrogenase (NAD+) activity"/>
    <property type="evidence" value="ECO:0007669"/>
    <property type="project" value="UniProtKB-EC"/>
</dbReference>
<dbReference type="GO" id="GO:0006081">
    <property type="term" value="P:aldehyde metabolic process"/>
    <property type="evidence" value="ECO:0007669"/>
    <property type="project" value="InterPro"/>
</dbReference>
<dbReference type="CDD" id="cd07138">
    <property type="entry name" value="ALDH_CddD_SSP0762"/>
    <property type="match status" value="1"/>
</dbReference>
<dbReference type="FunFam" id="3.40.605.10:FF:000026">
    <property type="entry name" value="Aldehyde dehydrogenase, putative"/>
    <property type="match status" value="1"/>
</dbReference>
<dbReference type="FunFam" id="3.40.309.10:FF:000012">
    <property type="entry name" value="Betaine aldehyde dehydrogenase"/>
    <property type="match status" value="1"/>
</dbReference>
<dbReference type="FunFam" id="3.40.605.10:FF:000007">
    <property type="entry name" value="NAD/NADP-dependent betaine aldehyde dehydrogenase"/>
    <property type="match status" value="1"/>
</dbReference>
<dbReference type="Gene3D" id="3.40.605.10">
    <property type="entry name" value="Aldehyde Dehydrogenase, Chain A, domain 1"/>
    <property type="match status" value="1"/>
</dbReference>
<dbReference type="Gene3D" id="3.40.309.10">
    <property type="entry name" value="Aldehyde Dehydrogenase, Chain A, domain 2"/>
    <property type="match status" value="1"/>
</dbReference>
<dbReference type="InterPro" id="IPR016161">
    <property type="entry name" value="Ald_DH/histidinol_DH"/>
</dbReference>
<dbReference type="InterPro" id="IPR016163">
    <property type="entry name" value="Ald_DH_C"/>
</dbReference>
<dbReference type="InterPro" id="IPR016160">
    <property type="entry name" value="Ald_DH_CS_CYS"/>
</dbReference>
<dbReference type="InterPro" id="IPR029510">
    <property type="entry name" value="Ald_DH_CS_GLU"/>
</dbReference>
<dbReference type="InterPro" id="IPR016162">
    <property type="entry name" value="Ald_DH_N"/>
</dbReference>
<dbReference type="InterPro" id="IPR015590">
    <property type="entry name" value="Aldehyde_DH_dom"/>
</dbReference>
<dbReference type="InterPro" id="IPR012394">
    <property type="entry name" value="Aldehyde_DH_NAD(P)"/>
</dbReference>
<dbReference type="PANTHER" id="PTHR42804">
    <property type="entry name" value="ALDEHYDE DEHYDROGENASE"/>
    <property type="match status" value="1"/>
</dbReference>
<dbReference type="PANTHER" id="PTHR42804:SF1">
    <property type="entry name" value="ALDEHYDE DEHYDROGENASE-RELATED"/>
    <property type="match status" value="1"/>
</dbReference>
<dbReference type="Pfam" id="PF00171">
    <property type="entry name" value="Aldedh"/>
    <property type="match status" value="1"/>
</dbReference>
<dbReference type="PIRSF" id="PIRSF036492">
    <property type="entry name" value="ALDH"/>
    <property type="match status" value="1"/>
</dbReference>
<dbReference type="SUPFAM" id="SSF53720">
    <property type="entry name" value="ALDH-like"/>
    <property type="match status" value="1"/>
</dbReference>
<dbReference type="PROSITE" id="PS00070">
    <property type="entry name" value="ALDEHYDE_DEHYDR_CYS"/>
    <property type="match status" value="1"/>
</dbReference>
<dbReference type="PROSITE" id="PS00687">
    <property type="entry name" value="ALDEHYDE_DEHYDR_GLU"/>
    <property type="match status" value="1"/>
</dbReference>
<organism>
    <name type="scientific">Staphylococcus aureus (strain Mu50 / ATCC 700699)</name>
    <dbReference type="NCBI Taxonomy" id="158878"/>
    <lineage>
        <taxon>Bacteria</taxon>
        <taxon>Bacillati</taxon>
        <taxon>Bacillota</taxon>
        <taxon>Bacilli</taxon>
        <taxon>Bacillales</taxon>
        <taxon>Staphylococcaceae</taxon>
        <taxon>Staphylococcus</taxon>
    </lineage>
</organism>
<evidence type="ECO:0000250" key="1">
    <source>
        <dbReference type="UniProtKB" id="P25526"/>
    </source>
</evidence>
<evidence type="ECO:0000305" key="2"/>
<evidence type="ECO:0000305" key="3">
    <source ref="2"/>
</evidence>
<evidence type="ECO:0007829" key="4">
    <source>
        <dbReference type="PDB" id="3TY7"/>
    </source>
</evidence>
<sequence length="475" mass="51969">MRDYTKQYINGEWVESNSNETIEVINPATEEVIGKVAKGNKADVDKAVEAADDVYLEFRHTSVKERQALLDKIVKEYENRKDDIVQAITDELGAPLSLSERVHYQMGLNHFVAARDALDNYEFEERRGDDLVVKEAIGVSGLITPWNFPTNQTSLKLAAAFAAGSPVVLKPSEETPFAAVILAEIFDKVGVPKGVFNLVNGDGAGVGNPLSEHPKVRMMSFTGSGPTGSKIMEKAAKDFKKVSLELGGKSPYIVLDDVDIKEAAKATTGKVVNNTGQVCTAGTRVLVPNKIKDAFLAELKEQFSQVRVGNPREDGTQVGPIISKKQFDQVQNYINKGIEEGAELFYGGPGKPEGLEKGYFARPTIFINVDNQMTIAQEEIFGPVMSVITYNDLDEAIQIANDTKYGLAGYVIGKDKETLHKVARSIEAGTVEINEAGRKPDLPFGGYKQSGLGREWGDYGIEEFLEVKSIAGYFK</sequence>
<comment type="catalytic activity">
    <reaction evidence="2">
        <text>an aldehyde + NAD(+) + H2O = a carboxylate + NADH + 2 H(+)</text>
        <dbReference type="Rhea" id="RHEA:16185"/>
        <dbReference type="ChEBI" id="CHEBI:15377"/>
        <dbReference type="ChEBI" id="CHEBI:15378"/>
        <dbReference type="ChEBI" id="CHEBI:17478"/>
        <dbReference type="ChEBI" id="CHEBI:29067"/>
        <dbReference type="ChEBI" id="CHEBI:57540"/>
        <dbReference type="ChEBI" id="CHEBI:57945"/>
        <dbReference type="EC" id="1.2.1.3"/>
    </reaction>
</comment>
<comment type="subunit">
    <text evidence="3">Homodimer.</text>
</comment>
<comment type="similarity">
    <text evidence="2">Belongs to the aldehyde dehydrogenase family.</text>
</comment>
<keyword id="KW-0002">3D-structure</keyword>
<keyword id="KW-0520">NAD</keyword>
<keyword id="KW-0560">Oxidoreductase</keyword>
<reference key="1">
    <citation type="journal article" date="2001" name="Lancet">
        <title>Whole genome sequencing of meticillin-resistant Staphylococcus aureus.</title>
        <authorList>
            <person name="Kuroda M."/>
            <person name="Ohta T."/>
            <person name="Uchiyama I."/>
            <person name="Baba T."/>
            <person name="Yuzawa H."/>
            <person name="Kobayashi I."/>
            <person name="Cui L."/>
            <person name="Oguchi A."/>
            <person name="Aoki K."/>
            <person name="Nagai Y."/>
            <person name="Lian J.-Q."/>
            <person name="Ito T."/>
            <person name="Kanamori M."/>
            <person name="Matsumaru H."/>
            <person name="Maruyama A."/>
            <person name="Murakami H."/>
            <person name="Hosoyama A."/>
            <person name="Mizutani-Ui Y."/>
            <person name="Takahashi N.K."/>
            <person name="Sawano T."/>
            <person name="Inoue R."/>
            <person name="Kaito C."/>
            <person name="Sekimizu K."/>
            <person name="Hirakawa H."/>
            <person name="Kuhara S."/>
            <person name="Goto S."/>
            <person name="Yabuzaki J."/>
            <person name="Kanehisa M."/>
            <person name="Yamashita A."/>
            <person name="Oshima K."/>
            <person name="Furuya K."/>
            <person name="Yoshino C."/>
            <person name="Shiba T."/>
            <person name="Hattori M."/>
            <person name="Ogasawara N."/>
            <person name="Hayashi H."/>
            <person name="Hiramatsu K."/>
        </authorList>
    </citation>
    <scope>NUCLEOTIDE SEQUENCE [LARGE SCALE GENOMIC DNA]</scope>
    <source>
        <strain>Mu50 / ATCC 700699</strain>
    </source>
</reference>
<reference key="2">
    <citation type="submission" date="2011-09" db="PDB data bank">
        <title>Crystal structure of aldehyde dehydrogenase family protein from Staphylococcus aureus.</title>
        <authorList>
            <person name="Kim Y."/>
            <person name="Joachimiak G."/>
            <person name="Jedrzejczak R."/>
            <person name="Rubin E."/>
            <person name="Ioerger T."/>
            <person name="Sacchettini J."/>
            <person name="Joachimiak A."/>
        </authorList>
    </citation>
    <scope>X-RAY CRYSTALLOGRAPHY (2.40 ANGSTROMS)</scope>
    <scope>SUBUNIT</scope>
</reference>
<accession>Q99SD6</accession>
<feature type="chain" id="PRO_0000293556" description="Putative aldehyde dehydrogenase">
    <location>
        <begin position="1"/>
        <end position="475"/>
    </location>
</feature>
<feature type="active site" description="Proton acceptor" evidence="1">
    <location>
        <position position="245"/>
    </location>
</feature>
<feature type="active site" description="Nucleophile" evidence="1">
    <location>
        <position position="279"/>
    </location>
</feature>
<feature type="binding site" evidence="1">
    <location>
        <begin position="146"/>
        <end position="147"/>
    </location>
    <ligand>
        <name>NAD(+)</name>
        <dbReference type="ChEBI" id="CHEBI:57540"/>
    </ligand>
</feature>
<feature type="binding site" evidence="1">
    <location>
        <begin position="223"/>
        <end position="224"/>
    </location>
    <ligand>
        <name>NAD(+)</name>
        <dbReference type="ChEBI" id="CHEBI:57540"/>
    </ligand>
</feature>
<feature type="binding site" evidence="1">
    <location>
        <position position="246"/>
    </location>
    <ligand>
        <name>NAD(+)</name>
        <dbReference type="ChEBI" id="CHEBI:57540"/>
    </ligand>
</feature>
<feature type="binding site" evidence="1">
    <location>
        <position position="379"/>
    </location>
    <ligand>
        <name>NAD(+)</name>
        <dbReference type="ChEBI" id="CHEBI:57540"/>
    </ligand>
</feature>
<feature type="strand" evidence="4">
    <location>
        <begin position="6"/>
        <end position="9"/>
    </location>
</feature>
<feature type="strand" evidence="4">
    <location>
        <begin position="12"/>
        <end position="15"/>
    </location>
</feature>
<feature type="strand" evidence="4">
    <location>
        <begin position="17"/>
        <end position="19"/>
    </location>
</feature>
<feature type="strand" evidence="4">
    <location>
        <begin position="21"/>
        <end position="25"/>
    </location>
</feature>
<feature type="turn" evidence="4">
    <location>
        <begin position="27"/>
        <end position="29"/>
    </location>
</feature>
<feature type="strand" evidence="4">
    <location>
        <begin position="32"/>
        <end position="37"/>
    </location>
</feature>
<feature type="helix" evidence="4">
    <location>
        <begin position="41"/>
        <end position="59"/>
    </location>
</feature>
<feature type="helix" evidence="4">
    <location>
        <begin position="63"/>
        <end position="79"/>
    </location>
</feature>
<feature type="helix" evidence="4">
    <location>
        <begin position="81"/>
        <end position="92"/>
    </location>
</feature>
<feature type="helix" evidence="4">
    <location>
        <begin position="96"/>
        <end position="101"/>
    </location>
</feature>
<feature type="helix" evidence="4">
    <location>
        <begin position="103"/>
        <end position="120"/>
    </location>
</feature>
<feature type="strand" evidence="4">
    <location>
        <begin position="123"/>
        <end position="127"/>
    </location>
</feature>
<feature type="strand" evidence="4">
    <location>
        <begin position="130"/>
        <end position="136"/>
    </location>
</feature>
<feature type="strand" evidence="4">
    <location>
        <begin position="140"/>
        <end position="143"/>
    </location>
</feature>
<feature type="strand" evidence="4">
    <location>
        <begin position="146"/>
        <end position="148"/>
    </location>
</feature>
<feature type="helix" evidence="4">
    <location>
        <begin position="151"/>
        <end position="163"/>
    </location>
</feature>
<feature type="strand" evidence="4">
    <location>
        <begin position="167"/>
        <end position="170"/>
    </location>
</feature>
<feature type="helix" evidence="4">
    <location>
        <begin position="177"/>
        <end position="189"/>
    </location>
</feature>
<feature type="turn" evidence="4">
    <location>
        <begin position="193"/>
        <end position="195"/>
    </location>
</feature>
<feature type="strand" evidence="4">
    <location>
        <begin position="196"/>
        <end position="198"/>
    </location>
</feature>
<feature type="turn" evidence="4">
    <location>
        <begin position="203"/>
        <end position="206"/>
    </location>
</feature>
<feature type="helix" evidence="4">
    <location>
        <begin position="207"/>
        <end position="212"/>
    </location>
</feature>
<feature type="strand" evidence="4">
    <location>
        <begin position="218"/>
        <end position="221"/>
    </location>
</feature>
<feature type="helix" evidence="4">
    <location>
        <begin position="225"/>
        <end position="228"/>
    </location>
</feature>
<feature type="turn" evidence="4">
    <location>
        <begin position="235"/>
        <end position="239"/>
    </location>
</feature>
<feature type="strand" evidence="4">
    <location>
        <begin position="241"/>
        <end position="243"/>
    </location>
</feature>
<feature type="strand" evidence="4">
    <location>
        <begin position="251"/>
        <end position="254"/>
    </location>
</feature>
<feature type="helix" evidence="4">
    <location>
        <begin position="260"/>
        <end position="272"/>
    </location>
</feature>
<feature type="helix" evidence="4">
    <location>
        <begin position="273"/>
        <end position="276"/>
    </location>
</feature>
<feature type="strand" evidence="4">
    <location>
        <begin position="284"/>
        <end position="288"/>
    </location>
</feature>
<feature type="turn" evidence="4">
    <location>
        <begin position="289"/>
        <end position="291"/>
    </location>
</feature>
<feature type="helix" evidence="4">
    <location>
        <begin position="292"/>
        <end position="304"/>
    </location>
</feature>
<feature type="helix" evidence="4">
    <location>
        <begin position="324"/>
        <end position="340"/>
    </location>
</feature>
<feature type="strand" evidence="4">
    <location>
        <begin position="343"/>
        <end position="346"/>
    </location>
</feature>
<feature type="strand" evidence="4">
    <location>
        <begin position="364"/>
        <end position="368"/>
    </location>
</feature>
<feature type="helix" evidence="4">
    <location>
        <begin position="374"/>
        <end position="377"/>
    </location>
</feature>
<feature type="strand" evidence="4">
    <location>
        <begin position="382"/>
        <end position="392"/>
    </location>
</feature>
<feature type="helix" evidence="4">
    <location>
        <begin position="393"/>
        <end position="400"/>
    </location>
</feature>
<feature type="strand" evidence="4">
    <location>
        <begin position="407"/>
        <end position="412"/>
    </location>
</feature>
<feature type="helix" evidence="4">
    <location>
        <begin position="416"/>
        <end position="425"/>
    </location>
</feature>
<feature type="strand" evidence="4">
    <location>
        <begin position="428"/>
        <end position="433"/>
    </location>
</feature>
<feature type="helix" evidence="4">
    <location>
        <begin position="462"/>
        <end position="464"/>
    </location>
</feature>
<feature type="strand" evidence="4">
    <location>
        <begin position="465"/>
        <end position="471"/>
    </location>
</feature>
<protein>
    <recommendedName>
        <fullName evidence="2">Putative aldehyde dehydrogenase</fullName>
        <ecNumber evidence="2">1.2.1.3</ecNumber>
    </recommendedName>
</protein>
<name>ALDH_STAAM</name>
<gene>
    <name type="ordered locus">SAV2122</name>
</gene>